<dbReference type="EC" id="6.1.1.21" evidence="2"/>
<dbReference type="EMBL" id="BC112731">
    <property type="protein sequence ID" value="AAI12732.1"/>
    <property type="molecule type" value="mRNA"/>
</dbReference>
<dbReference type="RefSeq" id="NP_001039531.1">
    <property type="nucleotide sequence ID" value="NM_001046066.2"/>
</dbReference>
<dbReference type="SMR" id="Q2KI84"/>
<dbReference type="FunCoup" id="Q2KI84">
    <property type="interactions" value="3876"/>
</dbReference>
<dbReference type="STRING" id="9913.ENSBTAP00000025094"/>
<dbReference type="PaxDb" id="9913-ENSBTAP00000025094"/>
<dbReference type="PeptideAtlas" id="Q2KI84"/>
<dbReference type="GeneID" id="510937"/>
<dbReference type="KEGG" id="bta:510937"/>
<dbReference type="CTD" id="3035"/>
<dbReference type="VEuPathDB" id="HostDB:ENSBTAG00000018847"/>
<dbReference type="eggNOG" id="KOG1936">
    <property type="taxonomic scope" value="Eukaryota"/>
</dbReference>
<dbReference type="HOGENOM" id="CLU_025113_4_2_1"/>
<dbReference type="InParanoid" id="Q2KI84"/>
<dbReference type="OMA" id="CGGGNFK"/>
<dbReference type="OrthoDB" id="1906957at2759"/>
<dbReference type="TreeFam" id="TF300652"/>
<dbReference type="Proteomes" id="UP000009136">
    <property type="component" value="Chromosome 7"/>
</dbReference>
<dbReference type="Bgee" id="ENSBTAG00000018847">
    <property type="expression patterns" value="Expressed in Ammon's horn and 102 other cell types or tissues"/>
</dbReference>
<dbReference type="GO" id="GO:0005737">
    <property type="term" value="C:cytoplasm"/>
    <property type="evidence" value="ECO:0000250"/>
    <property type="project" value="UniProtKB"/>
</dbReference>
<dbReference type="GO" id="GO:0005829">
    <property type="term" value="C:cytosol"/>
    <property type="evidence" value="ECO:0000318"/>
    <property type="project" value="GO_Central"/>
</dbReference>
<dbReference type="GO" id="GO:0005739">
    <property type="term" value="C:mitochondrion"/>
    <property type="evidence" value="ECO:0000318"/>
    <property type="project" value="GO_Central"/>
</dbReference>
<dbReference type="GO" id="GO:0005524">
    <property type="term" value="F:ATP binding"/>
    <property type="evidence" value="ECO:0000250"/>
    <property type="project" value="UniProtKB"/>
</dbReference>
<dbReference type="GO" id="GO:0004821">
    <property type="term" value="F:histidine-tRNA ligase activity"/>
    <property type="evidence" value="ECO:0000250"/>
    <property type="project" value="UniProtKB"/>
</dbReference>
<dbReference type="GO" id="GO:0042802">
    <property type="term" value="F:identical protein binding"/>
    <property type="evidence" value="ECO:0000318"/>
    <property type="project" value="GO_Central"/>
</dbReference>
<dbReference type="GO" id="GO:0042803">
    <property type="term" value="F:protein homodimerization activity"/>
    <property type="evidence" value="ECO:0000250"/>
    <property type="project" value="UniProtKB"/>
</dbReference>
<dbReference type="GO" id="GO:0003723">
    <property type="term" value="F:RNA binding"/>
    <property type="evidence" value="ECO:0000318"/>
    <property type="project" value="GO_Central"/>
</dbReference>
<dbReference type="GO" id="GO:0006427">
    <property type="term" value="P:histidyl-tRNA aminoacylation"/>
    <property type="evidence" value="ECO:0000250"/>
    <property type="project" value="UniProtKB"/>
</dbReference>
<dbReference type="GO" id="GO:0032543">
    <property type="term" value="P:mitochondrial translation"/>
    <property type="evidence" value="ECO:0000318"/>
    <property type="project" value="GO_Central"/>
</dbReference>
<dbReference type="CDD" id="cd00773">
    <property type="entry name" value="HisRS-like_core"/>
    <property type="match status" value="1"/>
</dbReference>
<dbReference type="CDD" id="cd00859">
    <property type="entry name" value="HisRS_anticodon"/>
    <property type="match status" value="1"/>
</dbReference>
<dbReference type="CDD" id="cd00938">
    <property type="entry name" value="HisRS_RNA"/>
    <property type="match status" value="1"/>
</dbReference>
<dbReference type="FunFam" id="3.40.50.800:FF:000008">
    <property type="entry name" value="histidine--tRNA ligase, cytoplasmic isoform X1"/>
    <property type="match status" value="1"/>
</dbReference>
<dbReference type="FunFam" id="1.10.287.10:FF:000008">
    <property type="entry name" value="histidine--tRNA ligase, cytoplasmic isoform X6"/>
    <property type="match status" value="1"/>
</dbReference>
<dbReference type="FunFam" id="3.30.930.10:FF:000021">
    <property type="entry name" value="Probable histidine--tRNA ligase, mitochondrial"/>
    <property type="match status" value="1"/>
</dbReference>
<dbReference type="Gene3D" id="3.40.50.800">
    <property type="entry name" value="Anticodon-binding domain"/>
    <property type="match status" value="1"/>
</dbReference>
<dbReference type="Gene3D" id="3.30.930.10">
    <property type="entry name" value="Bira Bifunctional Protein, Domain 2"/>
    <property type="match status" value="1"/>
</dbReference>
<dbReference type="Gene3D" id="1.10.287.10">
    <property type="entry name" value="S15/NS1, RNA-binding"/>
    <property type="match status" value="1"/>
</dbReference>
<dbReference type="HAMAP" id="MF_00127">
    <property type="entry name" value="His_tRNA_synth"/>
    <property type="match status" value="1"/>
</dbReference>
<dbReference type="InterPro" id="IPR006195">
    <property type="entry name" value="aa-tRNA-synth_II"/>
</dbReference>
<dbReference type="InterPro" id="IPR045864">
    <property type="entry name" value="aa-tRNA-synth_II/BPL/LPL"/>
</dbReference>
<dbReference type="InterPro" id="IPR004154">
    <property type="entry name" value="Anticodon-bd"/>
</dbReference>
<dbReference type="InterPro" id="IPR036621">
    <property type="entry name" value="Anticodon-bd_dom_sf"/>
</dbReference>
<dbReference type="InterPro" id="IPR015807">
    <property type="entry name" value="His-tRNA-ligase"/>
</dbReference>
<dbReference type="InterPro" id="IPR041715">
    <property type="entry name" value="HisRS-like_core"/>
</dbReference>
<dbReference type="InterPro" id="IPR004516">
    <property type="entry name" value="HisRS/HisZ"/>
</dbReference>
<dbReference type="InterPro" id="IPR033656">
    <property type="entry name" value="HisRS_anticodon"/>
</dbReference>
<dbReference type="InterPro" id="IPR009068">
    <property type="entry name" value="uS15_NS1_RNA-bd_sf"/>
</dbReference>
<dbReference type="InterPro" id="IPR000738">
    <property type="entry name" value="WHEP-TRS_dom"/>
</dbReference>
<dbReference type="NCBIfam" id="TIGR00442">
    <property type="entry name" value="hisS"/>
    <property type="match status" value="1"/>
</dbReference>
<dbReference type="PANTHER" id="PTHR11476:SF8">
    <property type="entry name" value="HISTIDINE--TRNA LIGASE, CYTOPLASMIC"/>
    <property type="match status" value="1"/>
</dbReference>
<dbReference type="PANTHER" id="PTHR11476">
    <property type="entry name" value="HISTIDYL-TRNA SYNTHETASE"/>
    <property type="match status" value="1"/>
</dbReference>
<dbReference type="Pfam" id="PF03129">
    <property type="entry name" value="HGTP_anticodon"/>
    <property type="match status" value="1"/>
</dbReference>
<dbReference type="Pfam" id="PF13393">
    <property type="entry name" value="tRNA-synt_His"/>
    <property type="match status" value="1"/>
</dbReference>
<dbReference type="Pfam" id="PF00458">
    <property type="entry name" value="WHEP-TRS"/>
    <property type="match status" value="1"/>
</dbReference>
<dbReference type="PIRSF" id="PIRSF001549">
    <property type="entry name" value="His-tRNA_synth"/>
    <property type="match status" value="1"/>
</dbReference>
<dbReference type="SMART" id="SM00991">
    <property type="entry name" value="WHEP-TRS"/>
    <property type="match status" value="1"/>
</dbReference>
<dbReference type="SUPFAM" id="SSF52954">
    <property type="entry name" value="Class II aaRS ABD-related"/>
    <property type="match status" value="1"/>
</dbReference>
<dbReference type="SUPFAM" id="SSF55681">
    <property type="entry name" value="Class II aaRS and biotin synthetases"/>
    <property type="match status" value="1"/>
</dbReference>
<dbReference type="SUPFAM" id="SSF47060">
    <property type="entry name" value="S15/NS1 RNA-binding domain"/>
    <property type="match status" value="1"/>
</dbReference>
<dbReference type="PROSITE" id="PS50862">
    <property type="entry name" value="AA_TRNA_LIGASE_II"/>
    <property type="match status" value="1"/>
</dbReference>
<dbReference type="PROSITE" id="PS00762">
    <property type="entry name" value="WHEP_TRS_1"/>
    <property type="match status" value="1"/>
</dbReference>
<dbReference type="PROSITE" id="PS51185">
    <property type="entry name" value="WHEP_TRS_2"/>
    <property type="match status" value="1"/>
</dbReference>
<organism>
    <name type="scientific">Bos taurus</name>
    <name type="common">Bovine</name>
    <dbReference type="NCBI Taxonomy" id="9913"/>
    <lineage>
        <taxon>Eukaryota</taxon>
        <taxon>Metazoa</taxon>
        <taxon>Chordata</taxon>
        <taxon>Craniata</taxon>
        <taxon>Vertebrata</taxon>
        <taxon>Euteleostomi</taxon>
        <taxon>Mammalia</taxon>
        <taxon>Eutheria</taxon>
        <taxon>Laurasiatheria</taxon>
        <taxon>Artiodactyla</taxon>
        <taxon>Ruminantia</taxon>
        <taxon>Pecora</taxon>
        <taxon>Bovidae</taxon>
        <taxon>Bovinae</taxon>
        <taxon>Bos</taxon>
    </lineage>
</organism>
<proteinExistence type="evidence at transcript level"/>
<reference key="1">
    <citation type="submission" date="2006-01" db="EMBL/GenBank/DDBJ databases">
        <authorList>
            <consortium name="NIH - Mammalian Gene Collection (MGC) project"/>
        </authorList>
    </citation>
    <scope>NUCLEOTIDE SEQUENCE [LARGE SCALE MRNA]</scope>
    <source>
        <strain>Hereford</strain>
        <tissue>Hypothalamus</tissue>
    </source>
</reference>
<evidence type="ECO:0000250" key="1">
    <source>
        <dbReference type="UniProtKB" id="F1Q5D5"/>
    </source>
</evidence>
<evidence type="ECO:0000250" key="2">
    <source>
        <dbReference type="UniProtKB" id="P12081"/>
    </source>
</evidence>
<evidence type="ECO:0000250" key="3">
    <source>
        <dbReference type="UniProtKB" id="Q99KK9"/>
    </source>
</evidence>
<evidence type="ECO:0000305" key="4"/>
<sequence>MADRAALEDLVRVQGERVRGLKQQKASAEQIEEEVAKLLKLKAQLGPDEGKPKFVLKTPKGTRDYSPRQMAVREKVFDVIISCFKRHGAEVIDTPVFELKETLTGKYGEDSKLIYDLKDQGGELLSLRYDLTVPFARYLAMNKLTNIKRYHIAKVYRRDNPAMTRGRYREFYQCDFDIAGQFDPMLPDAECLKIMCEILSSLQIGDFLVKVNDRRILDGMFAICGVPDSKFRTICSSVDKLDKVSWEEVKNEMVGEKGLAPEVADRIGDYVQQHGGVSLVEQLLQDPKLSQNKQALEGLGDLKLLFEYLTLFGIADKISFDLSLARGLDYYTGVIYEAVLLQPPARAGEEPLGVGSVAAGGRYDGLVGMFDPKGRKVPCVGLSIGVERIFSIVEQRLEALEEKVRTTETQVLVASAQKKLLEERLKLISELWDAGIKAELLYKKNPKLLNQLQYCEETGIPLVAIIGEQELKDGVIKLRSVASREEVDVRREDLVEEIKRRTSQPLCIC</sequence>
<feature type="initiator methionine" description="Removed" evidence="2">
    <location>
        <position position="1"/>
    </location>
</feature>
<feature type="chain" id="PRO_0000245021" description="Histidine--tRNA ligase, cytoplasmic">
    <location>
        <begin position="2"/>
        <end position="509"/>
    </location>
</feature>
<feature type="domain" description="WHEP-TRS">
    <location>
        <begin position="3"/>
        <end position="59"/>
    </location>
</feature>
<feature type="binding site" evidence="2">
    <location>
        <begin position="130"/>
        <end position="132"/>
    </location>
    <ligand>
        <name>L-histidine</name>
        <dbReference type="ChEBI" id="CHEBI:57595"/>
    </ligand>
</feature>
<feature type="binding site" evidence="2">
    <location>
        <position position="157"/>
    </location>
    <ligand>
        <name>L-histidine</name>
        <dbReference type="ChEBI" id="CHEBI:57595"/>
    </ligand>
</feature>
<feature type="binding site" evidence="2">
    <location>
        <position position="173"/>
    </location>
    <ligand>
        <name>L-histidine</name>
        <dbReference type="ChEBI" id="CHEBI:57595"/>
    </ligand>
</feature>
<feature type="binding site" evidence="2">
    <location>
        <position position="177"/>
    </location>
    <ligand>
        <name>L-histidine</name>
        <dbReference type="ChEBI" id="CHEBI:57595"/>
    </ligand>
</feature>
<feature type="binding site" evidence="2">
    <location>
        <position position="326"/>
    </location>
    <ligand>
        <name>L-histidine</name>
        <dbReference type="ChEBI" id="CHEBI:57595"/>
    </ligand>
</feature>
<feature type="binding site" evidence="2">
    <location>
        <begin position="330"/>
        <end position="331"/>
    </location>
    <ligand>
        <name>L-histidine</name>
        <dbReference type="ChEBI" id="CHEBI:57595"/>
    </ligand>
</feature>
<feature type="modified residue" description="N-acetylalanine" evidence="2">
    <location>
        <position position="2"/>
    </location>
</feature>
<feature type="modified residue" description="Phosphoserine" evidence="3">
    <location>
        <position position="66"/>
    </location>
</feature>
<feature type="modified residue" description="Phosphoserine" evidence="2">
    <location>
        <position position="356"/>
    </location>
</feature>
<gene>
    <name type="primary">HARS1</name>
    <name type="synonym">HARS</name>
</gene>
<protein>
    <recommendedName>
        <fullName>Histidine--tRNA ligase, cytoplasmic</fullName>
        <ecNumber evidence="2">6.1.1.21</ecNumber>
    </recommendedName>
    <alternativeName>
        <fullName>Histidyl-tRNA synthetase</fullName>
        <shortName>HisRS</shortName>
    </alternativeName>
</protein>
<accession>Q2KI84</accession>
<keyword id="KW-0007">Acetylation</keyword>
<keyword id="KW-0030">Aminoacyl-tRNA synthetase</keyword>
<keyword id="KW-0067">ATP-binding</keyword>
<keyword id="KW-0963">Cytoplasm</keyword>
<keyword id="KW-0436">Ligase</keyword>
<keyword id="KW-0547">Nucleotide-binding</keyword>
<keyword id="KW-0597">Phosphoprotein</keyword>
<keyword id="KW-0648">Protein biosynthesis</keyword>
<keyword id="KW-1185">Reference proteome</keyword>
<comment type="function">
    <text evidence="2">Catalyzes the ATP-dependent ligation of histidine to the 3'-end of its cognate tRNA, via the formation of an aminoacyl-adenylate intermediate (His-AMP). Plays a role in axon guidance.</text>
</comment>
<comment type="catalytic activity">
    <reaction evidence="2">
        <text>tRNA(His) + L-histidine + ATP = L-histidyl-tRNA(His) + AMP + diphosphate + H(+)</text>
        <dbReference type="Rhea" id="RHEA:17313"/>
        <dbReference type="Rhea" id="RHEA-COMP:9665"/>
        <dbReference type="Rhea" id="RHEA-COMP:9689"/>
        <dbReference type="ChEBI" id="CHEBI:15378"/>
        <dbReference type="ChEBI" id="CHEBI:30616"/>
        <dbReference type="ChEBI" id="CHEBI:33019"/>
        <dbReference type="ChEBI" id="CHEBI:57595"/>
        <dbReference type="ChEBI" id="CHEBI:78442"/>
        <dbReference type="ChEBI" id="CHEBI:78527"/>
        <dbReference type="ChEBI" id="CHEBI:456215"/>
        <dbReference type="EC" id="6.1.1.21"/>
    </reaction>
</comment>
<comment type="subunit">
    <text evidence="2">Homodimer.</text>
</comment>
<comment type="subcellular location">
    <subcellularLocation>
        <location evidence="1">Cytoplasm</location>
    </subcellularLocation>
</comment>
<comment type="similarity">
    <text evidence="4">Belongs to the class-II aminoacyl-tRNA synthetase family.</text>
</comment>
<name>HARS1_BOVIN</name>